<sequence length="324" mass="35047">MTSTGSTRYDGDSWDLASSVGVTATMVAAARAMATRAENPLINDPYAEPLVRAVGVDLLTRLATGEFNVADLDDDPQRPLGPLGDVADNMAVRTRFFDDFFLDATRAGLEQVVILASGLDARAYRLPWPPQTVVYEIDLPQVIEFKSRTLADLGAAPTADRRVVAVDLREDWPAALRAAGFDPNQPTAWSAEGLLGYLPPEAQDRLLDTVTELSAPGSRLAAECLSSVDPGEEEQIKERMQEVSARWRAHGFDVDMVGLVYFGDRNEAVPYLSDRGWLLTSTPLPELRAANGLAPAAVDDDGPSVDMLYVSGTLYTTPRPDPAP</sequence>
<name>Y1059_MYCMM</name>
<comment type="function">
    <text evidence="1">Exhibits S-adenosyl-L-methionine-dependent methyltransferase activity.</text>
</comment>
<comment type="similarity">
    <text evidence="2">Belongs to the UPF0677 family.</text>
</comment>
<accession>B2HCU5</accession>
<evidence type="ECO:0000250" key="1"/>
<evidence type="ECO:0000305" key="2"/>
<keyword id="KW-0489">Methyltransferase</keyword>
<keyword id="KW-1185">Reference proteome</keyword>
<keyword id="KW-0949">S-adenosyl-L-methionine</keyword>
<keyword id="KW-0808">Transferase</keyword>
<organism>
    <name type="scientific">Mycobacterium marinum (strain ATCC BAA-535 / M)</name>
    <dbReference type="NCBI Taxonomy" id="216594"/>
    <lineage>
        <taxon>Bacteria</taxon>
        <taxon>Bacillati</taxon>
        <taxon>Actinomycetota</taxon>
        <taxon>Actinomycetes</taxon>
        <taxon>Mycobacteriales</taxon>
        <taxon>Mycobacteriaceae</taxon>
        <taxon>Mycobacterium</taxon>
        <taxon>Mycobacterium ulcerans group</taxon>
    </lineage>
</organism>
<dbReference type="EC" id="2.1.1.-"/>
<dbReference type="EMBL" id="CP000854">
    <property type="protein sequence ID" value="ACC39517.1"/>
    <property type="molecule type" value="Genomic_DNA"/>
</dbReference>
<dbReference type="RefSeq" id="WP_012392957.1">
    <property type="nucleotide sequence ID" value="NC_010612.1"/>
</dbReference>
<dbReference type="SMR" id="B2HCU5"/>
<dbReference type="STRING" id="216594.MMAR_1059"/>
<dbReference type="KEGG" id="mmi:MMAR_1059"/>
<dbReference type="eggNOG" id="COG3315">
    <property type="taxonomic scope" value="Bacteria"/>
</dbReference>
<dbReference type="HOGENOM" id="CLU_056160_2_1_11"/>
<dbReference type="OrthoDB" id="9806164at2"/>
<dbReference type="Proteomes" id="UP000001190">
    <property type="component" value="Chromosome"/>
</dbReference>
<dbReference type="GO" id="GO:0008168">
    <property type="term" value="F:methyltransferase activity"/>
    <property type="evidence" value="ECO:0007669"/>
    <property type="project" value="UniProtKB-KW"/>
</dbReference>
<dbReference type="GO" id="GO:0032259">
    <property type="term" value="P:methylation"/>
    <property type="evidence" value="ECO:0007669"/>
    <property type="project" value="UniProtKB-KW"/>
</dbReference>
<dbReference type="Gene3D" id="3.40.50.150">
    <property type="entry name" value="Vaccinia Virus protein VP39"/>
    <property type="match status" value="1"/>
</dbReference>
<dbReference type="InterPro" id="IPR007213">
    <property type="entry name" value="Ppm1/Ppm2/Tcmp"/>
</dbReference>
<dbReference type="InterPro" id="IPR029063">
    <property type="entry name" value="SAM-dependent_MTases_sf"/>
</dbReference>
<dbReference type="InterPro" id="IPR011610">
    <property type="entry name" value="SAM_mthyl_Trfase_ML2640-like"/>
</dbReference>
<dbReference type="NCBIfam" id="TIGR00027">
    <property type="entry name" value="mthyl_TIGR00027"/>
    <property type="match status" value="1"/>
</dbReference>
<dbReference type="PANTHER" id="PTHR43619">
    <property type="entry name" value="S-ADENOSYL-L-METHIONINE-DEPENDENT METHYLTRANSFERASE YKTD-RELATED"/>
    <property type="match status" value="1"/>
</dbReference>
<dbReference type="PANTHER" id="PTHR43619:SF2">
    <property type="entry name" value="S-ADENOSYL-L-METHIONINE-DEPENDENT METHYLTRANSFERASES SUPERFAMILY PROTEIN"/>
    <property type="match status" value="1"/>
</dbReference>
<dbReference type="Pfam" id="PF04072">
    <property type="entry name" value="LCM"/>
    <property type="match status" value="1"/>
</dbReference>
<dbReference type="SUPFAM" id="SSF53335">
    <property type="entry name" value="S-adenosyl-L-methionine-dependent methyltransferases"/>
    <property type="match status" value="1"/>
</dbReference>
<gene>
    <name type="ordered locus">MMAR_1059</name>
</gene>
<proteinExistence type="inferred from homology"/>
<protein>
    <recommendedName>
        <fullName>Putative S-adenosyl-L-methionine-dependent methyltransferase MMAR_1059</fullName>
        <ecNumber>2.1.1.-</ecNumber>
    </recommendedName>
</protein>
<feature type="chain" id="PRO_0000361162" description="Putative S-adenosyl-L-methionine-dependent methyltransferase MMAR_1059">
    <location>
        <begin position="1"/>
        <end position="324"/>
    </location>
</feature>
<feature type="binding site" evidence="1">
    <location>
        <position position="138"/>
    </location>
    <ligand>
        <name>S-adenosyl-L-methionine</name>
        <dbReference type="ChEBI" id="CHEBI:59789"/>
    </ligand>
</feature>
<feature type="binding site" evidence="1">
    <location>
        <begin position="167"/>
        <end position="168"/>
    </location>
    <ligand>
        <name>S-adenosyl-L-methionine</name>
        <dbReference type="ChEBI" id="CHEBI:59789"/>
    </ligand>
</feature>
<reference key="1">
    <citation type="journal article" date="2008" name="Genome Res.">
        <title>Insights from the complete genome sequence of Mycobacterium marinum on the evolution of Mycobacterium tuberculosis.</title>
        <authorList>
            <person name="Stinear T.P."/>
            <person name="Seemann T."/>
            <person name="Harrison P.F."/>
            <person name="Jenkin G.A."/>
            <person name="Davies J.K."/>
            <person name="Johnson P.D."/>
            <person name="Abdellah Z."/>
            <person name="Arrowsmith C."/>
            <person name="Chillingworth T."/>
            <person name="Churcher C."/>
            <person name="Clarke K."/>
            <person name="Cronin A."/>
            <person name="Davis P."/>
            <person name="Goodhead I."/>
            <person name="Holroyd N."/>
            <person name="Jagels K."/>
            <person name="Lord A."/>
            <person name="Moule S."/>
            <person name="Mungall K."/>
            <person name="Norbertczak H."/>
            <person name="Quail M.A."/>
            <person name="Rabbinowitsch E."/>
            <person name="Walker D."/>
            <person name="White B."/>
            <person name="Whitehead S."/>
            <person name="Small P.L."/>
            <person name="Brosch R."/>
            <person name="Ramakrishnan L."/>
            <person name="Fischbach M.A."/>
            <person name="Parkhill J."/>
            <person name="Cole S.T."/>
        </authorList>
    </citation>
    <scope>NUCLEOTIDE SEQUENCE [LARGE SCALE GENOMIC DNA]</scope>
    <source>
        <strain>ATCC BAA-535 / M</strain>
    </source>
</reference>